<dbReference type="EC" id="6.3.5.7" evidence="1"/>
<dbReference type="EMBL" id="CP000058">
    <property type="protein sequence ID" value="AAZ36055.1"/>
    <property type="molecule type" value="Genomic_DNA"/>
</dbReference>
<dbReference type="RefSeq" id="WP_004666201.1">
    <property type="nucleotide sequence ID" value="NC_005773.3"/>
</dbReference>
<dbReference type="SMR" id="Q48E92"/>
<dbReference type="KEGG" id="psp:PSPPH_4174"/>
<dbReference type="eggNOG" id="COG0154">
    <property type="taxonomic scope" value="Bacteria"/>
</dbReference>
<dbReference type="HOGENOM" id="CLU_009600_0_3_6"/>
<dbReference type="Proteomes" id="UP000000551">
    <property type="component" value="Chromosome"/>
</dbReference>
<dbReference type="GO" id="GO:0030956">
    <property type="term" value="C:glutamyl-tRNA(Gln) amidotransferase complex"/>
    <property type="evidence" value="ECO:0007669"/>
    <property type="project" value="InterPro"/>
</dbReference>
<dbReference type="GO" id="GO:0005524">
    <property type="term" value="F:ATP binding"/>
    <property type="evidence" value="ECO:0007669"/>
    <property type="project" value="UniProtKB-KW"/>
</dbReference>
<dbReference type="GO" id="GO:0050567">
    <property type="term" value="F:glutaminyl-tRNA synthase (glutamine-hydrolyzing) activity"/>
    <property type="evidence" value="ECO:0007669"/>
    <property type="project" value="UniProtKB-UniRule"/>
</dbReference>
<dbReference type="GO" id="GO:0006412">
    <property type="term" value="P:translation"/>
    <property type="evidence" value="ECO:0007669"/>
    <property type="project" value="UniProtKB-UniRule"/>
</dbReference>
<dbReference type="Gene3D" id="3.90.1300.10">
    <property type="entry name" value="Amidase signature (AS) domain"/>
    <property type="match status" value="1"/>
</dbReference>
<dbReference type="HAMAP" id="MF_00120">
    <property type="entry name" value="GatA"/>
    <property type="match status" value="1"/>
</dbReference>
<dbReference type="InterPro" id="IPR000120">
    <property type="entry name" value="Amidase"/>
</dbReference>
<dbReference type="InterPro" id="IPR020556">
    <property type="entry name" value="Amidase_CS"/>
</dbReference>
<dbReference type="InterPro" id="IPR023631">
    <property type="entry name" value="Amidase_dom"/>
</dbReference>
<dbReference type="InterPro" id="IPR036928">
    <property type="entry name" value="AS_sf"/>
</dbReference>
<dbReference type="InterPro" id="IPR004412">
    <property type="entry name" value="GatA"/>
</dbReference>
<dbReference type="NCBIfam" id="TIGR00132">
    <property type="entry name" value="gatA"/>
    <property type="match status" value="1"/>
</dbReference>
<dbReference type="PANTHER" id="PTHR11895:SF151">
    <property type="entry name" value="GLUTAMYL-TRNA(GLN) AMIDOTRANSFERASE SUBUNIT A"/>
    <property type="match status" value="1"/>
</dbReference>
<dbReference type="PANTHER" id="PTHR11895">
    <property type="entry name" value="TRANSAMIDASE"/>
    <property type="match status" value="1"/>
</dbReference>
<dbReference type="Pfam" id="PF01425">
    <property type="entry name" value="Amidase"/>
    <property type="match status" value="1"/>
</dbReference>
<dbReference type="SUPFAM" id="SSF75304">
    <property type="entry name" value="Amidase signature (AS) enzymes"/>
    <property type="match status" value="1"/>
</dbReference>
<dbReference type="PROSITE" id="PS00571">
    <property type="entry name" value="AMIDASES"/>
    <property type="match status" value="1"/>
</dbReference>
<name>GATA_PSE14</name>
<proteinExistence type="inferred from homology"/>
<keyword id="KW-0067">ATP-binding</keyword>
<keyword id="KW-0436">Ligase</keyword>
<keyword id="KW-0547">Nucleotide-binding</keyword>
<keyword id="KW-0648">Protein biosynthesis</keyword>
<feature type="chain" id="PRO_0000241134" description="Glutamyl-tRNA(Gln) amidotransferase subunit A">
    <location>
        <begin position="1"/>
        <end position="483"/>
    </location>
</feature>
<feature type="active site" description="Charge relay system" evidence="1">
    <location>
        <position position="76"/>
    </location>
</feature>
<feature type="active site" description="Charge relay system" evidence="1">
    <location>
        <position position="151"/>
    </location>
</feature>
<feature type="active site" description="Acyl-ester intermediate" evidence="1">
    <location>
        <position position="175"/>
    </location>
</feature>
<reference key="1">
    <citation type="journal article" date="2005" name="J. Bacteriol.">
        <title>Whole-genome sequence analysis of Pseudomonas syringae pv. phaseolicola 1448A reveals divergence among pathovars in genes involved in virulence and transposition.</title>
        <authorList>
            <person name="Joardar V."/>
            <person name="Lindeberg M."/>
            <person name="Jackson R.W."/>
            <person name="Selengut J."/>
            <person name="Dodson R."/>
            <person name="Brinkac L.M."/>
            <person name="Daugherty S.C."/>
            <person name="DeBoy R.T."/>
            <person name="Durkin A.S."/>
            <person name="Gwinn Giglio M."/>
            <person name="Madupu R."/>
            <person name="Nelson W.C."/>
            <person name="Rosovitz M.J."/>
            <person name="Sullivan S.A."/>
            <person name="Crabtree J."/>
            <person name="Creasy T."/>
            <person name="Davidsen T.M."/>
            <person name="Haft D.H."/>
            <person name="Zafar N."/>
            <person name="Zhou L."/>
            <person name="Halpin R."/>
            <person name="Holley T."/>
            <person name="Khouri H.M."/>
            <person name="Feldblyum T.V."/>
            <person name="White O."/>
            <person name="Fraser C.M."/>
            <person name="Chatterjee A.K."/>
            <person name="Cartinhour S."/>
            <person name="Schneider D."/>
            <person name="Mansfield J.W."/>
            <person name="Collmer A."/>
            <person name="Buell R."/>
        </authorList>
    </citation>
    <scope>NUCLEOTIDE SEQUENCE [LARGE SCALE GENOMIC DNA]</scope>
    <source>
        <strain>1448A / Race 6</strain>
    </source>
</reference>
<protein>
    <recommendedName>
        <fullName evidence="1">Glutamyl-tRNA(Gln) amidotransferase subunit A</fullName>
        <shortName evidence="1">Glu-ADT subunit A</shortName>
        <ecNumber evidence="1">6.3.5.7</ecNumber>
    </recommendedName>
</protein>
<sequence length="483" mass="51866">MHQMTLAEIARGLAEKKFSSEELTRVLLSRIATLDPQLNSFISLTEDLAITQAQAADARRAAGENGPLLGAPLAHKDLFCTQGIRTSCGSRMLDNFKAPYDATVVSKLASAGTVTLGKTNMDEFAMGSANESSHYGAVKNPWNLQCVPGGSSGGSAAAVAARLLPAATGTDTGGSIRQPAALTNLTGLKPTYGRVSRWGMIAYASSLDQAGPMARTAEDCALLLQGMAGFDPQDSTSIDEPVPDYSASLNTSLKGLRIGVPKEYFSAGLDPRIAQLVHESVKELEKLGAVVKEVSLPNLQHAIPAYYVIAPAEASSNLSRFDGVRFGYRCEDPKDLTDLYKRSRAEGFGPEVQRRIMVGAYALSAGYYDAYYLQAQKIRRLIKNDFMSAFAEVDVILGPTTPNPAWKIGAKTNDPIAEYLEDFYTITANLAGLPGLSMPAGFVDGLPVGVQLLAPYFQEGRLLNVAHQYQQVTDWHTRAPEGF</sequence>
<gene>
    <name evidence="1" type="primary">gatA</name>
    <name type="ordered locus">PSPPH_4174</name>
</gene>
<comment type="function">
    <text evidence="1">Allows the formation of correctly charged Gln-tRNA(Gln) through the transamidation of misacylated Glu-tRNA(Gln) in organisms which lack glutaminyl-tRNA synthetase. The reaction takes place in the presence of glutamine and ATP through an activated gamma-phospho-Glu-tRNA(Gln).</text>
</comment>
<comment type="catalytic activity">
    <reaction evidence="1">
        <text>L-glutamyl-tRNA(Gln) + L-glutamine + ATP + H2O = L-glutaminyl-tRNA(Gln) + L-glutamate + ADP + phosphate + H(+)</text>
        <dbReference type="Rhea" id="RHEA:17521"/>
        <dbReference type="Rhea" id="RHEA-COMP:9681"/>
        <dbReference type="Rhea" id="RHEA-COMP:9684"/>
        <dbReference type="ChEBI" id="CHEBI:15377"/>
        <dbReference type="ChEBI" id="CHEBI:15378"/>
        <dbReference type="ChEBI" id="CHEBI:29985"/>
        <dbReference type="ChEBI" id="CHEBI:30616"/>
        <dbReference type="ChEBI" id="CHEBI:43474"/>
        <dbReference type="ChEBI" id="CHEBI:58359"/>
        <dbReference type="ChEBI" id="CHEBI:78520"/>
        <dbReference type="ChEBI" id="CHEBI:78521"/>
        <dbReference type="ChEBI" id="CHEBI:456216"/>
        <dbReference type="EC" id="6.3.5.7"/>
    </reaction>
</comment>
<comment type="subunit">
    <text evidence="1">Heterotrimer of A, B and C subunits.</text>
</comment>
<comment type="similarity">
    <text evidence="1">Belongs to the amidase family. GatA subfamily.</text>
</comment>
<accession>Q48E92</accession>
<evidence type="ECO:0000255" key="1">
    <source>
        <dbReference type="HAMAP-Rule" id="MF_00120"/>
    </source>
</evidence>
<organism>
    <name type="scientific">Pseudomonas savastanoi pv. phaseolicola (strain 1448A / Race 6)</name>
    <name type="common">Pseudomonas syringae pv. phaseolicola (strain 1448A / Race 6)</name>
    <dbReference type="NCBI Taxonomy" id="264730"/>
    <lineage>
        <taxon>Bacteria</taxon>
        <taxon>Pseudomonadati</taxon>
        <taxon>Pseudomonadota</taxon>
        <taxon>Gammaproteobacteria</taxon>
        <taxon>Pseudomonadales</taxon>
        <taxon>Pseudomonadaceae</taxon>
        <taxon>Pseudomonas</taxon>
    </lineage>
</organism>